<accession>Q9REQ3</accession>
<accession>Q5NPC2</accession>
<sequence length="448" mass="50967">MTAFLPFLAFLFGLIIAGLPLLWYIRQQKTALDGLQARVLEGAKAEEQARRIPALEQAVESWREKASLLMAEQAANKRGEEEREKAYRQQIEQLKATEDALSQKFDSLAAKTLEKAHGQFLEQAQMRFAKSEREGEAKLELLLQPVKDSLKRYEASVKEAEQLRQTEYGSLTALVSTMREGQEAVKNEANKLVNALRTAPKARGCWGEQQLRNVLESCGLSEYVDFETEVSVNSEKGRLRPDAIIRIPNGSILVVDSKVSLNAYQDAYDAVDEDKRQLYLQAHSKAIKAHIDGLSQKNYWDQFKEAPDYVIMFIPGEHFLSAALEQDHNLWEYAFQKRVLLATPTNLIAIARTVAAVWRQEDIAHNARKIGELGKELYERIAKVDAHMRALGNSLENSVKNYNKFVGSFESRVLVTARKFRELNIETKEQEIKEAPILEITPRMEDKE</sequence>
<dbReference type="EMBL" id="AF213822">
    <property type="protein sequence ID" value="AAF23792.1"/>
    <property type="molecule type" value="Genomic_DNA"/>
</dbReference>
<dbReference type="EMBL" id="AE008692">
    <property type="protein sequence ID" value="AAV89438.1"/>
    <property type="molecule type" value="Genomic_DNA"/>
</dbReference>
<dbReference type="RefSeq" id="WP_011240686.1">
    <property type="nucleotide sequence ID" value="NZ_CP035711.1"/>
</dbReference>
<dbReference type="SMR" id="Q9REQ3"/>
<dbReference type="STRING" id="264203.ZMO0814"/>
<dbReference type="KEGG" id="zmo:ZMO0814"/>
<dbReference type="eggNOG" id="COG1322">
    <property type="taxonomic scope" value="Bacteria"/>
</dbReference>
<dbReference type="HOGENOM" id="CLU_024057_1_0_5"/>
<dbReference type="Proteomes" id="UP000001173">
    <property type="component" value="Chromosome"/>
</dbReference>
<dbReference type="GO" id="GO:0006310">
    <property type="term" value="P:DNA recombination"/>
    <property type="evidence" value="ECO:0007669"/>
    <property type="project" value="UniProtKB-KW"/>
</dbReference>
<dbReference type="InterPro" id="IPR003798">
    <property type="entry name" value="DNA_recombination_RmuC"/>
</dbReference>
<dbReference type="PANTHER" id="PTHR30563">
    <property type="entry name" value="DNA RECOMBINATION PROTEIN RMUC"/>
    <property type="match status" value="1"/>
</dbReference>
<dbReference type="PANTHER" id="PTHR30563:SF0">
    <property type="entry name" value="DNA RECOMBINATION PROTEIN RMUC"/>
    <property type="match status" value="1"/>
</dbReference>
<dbReference type="Pfam" id="PF02646">
    <property type="entry name" value="RmuC"/>
    <property type="match status" value="1"/>
</dbReference>
<protein>
    <recommendedName>
        <fullName>DNA recombination protein RmuC homolog</fullName>
    </recommendedName>
</protein>
<evidence type="ECO:0000250" key="1"/>
<evidence type="ECO:0000255" key="2"/>
<evidence type="ECO:0000305" key="3"/>
<proteinExistence type="inferred from homology"/>
<keyword id="KW-0175">Coiled coil</keyword>
<keyword id="KW-0233">DNA recombination</keyword>
<keyword id="KW-1185">Reference proteome</keyword>
<gene>
    <name type="primary">rmuC</name>
    <name type="ordered locus">ZMO0814</name>
</gene>
<organism>
    <name type="scientific">Zymomonas mobilis subsp. mobilis (strain ATCC 31821 / ZM4 / CP4)</name>
    <dbReference type="NCBI Taxonomy" id="264203"/>
    <lineage>
        <taxon>Bacteria</taxon>
        <taxon>Pseudomonadati</taxon>
        <taxon>Pseudomonadota</taxon>
        <taxon>Alphaproteobacteria</taxon>
        <taxon>Sphingomonadales</taxon>
        <taxon>Zymomonadaceae</taxon>
        <taxon>Zymomonas</taxon>
    </lineage>
</organism>
<reference key="1">
    <citation type="submission" date="1999-12" db="EMBL/GenBank/DDBJ databases">
        <authorList>
            <person name="Um H.W."/>
            <person name="Kang H.S."/>
        </authorList>
    </citation>
    <scope>NUCLEOTIDE SEQUENCE [GENOMIC DNA]</scope>
    <source>
        <strain>ATCC 31821 / ZM4 / CP4</strain>
    </source>
</reference>
<reference key="2">
    <citation type="journal article" date="2005" name="Nat. Biotechnol.">
        <title>The genome sequence of the ethanologenic bacterium Zymomonas mobilis ZM4.</title>
        <authorList>
            <person name="Seo J.-S."/>
            <person name="Chong H."/>
            <person name="Park H.S."/>
            <person name="Yoon K.-O."/>
            <person name="Jung C."/>
            <person name="Kim J.J."/>
            <person name="Hong J.H."/>
            <person name="Kim H."/>
            <person name="Kim J.-H."/>
            <person name="Kil J.-I."/>
            <person name="Park C.J."/>
            <person name="Oh H.-M."/>
            <person name="Lee J.-S."/>
            <person name="Jin S.-J."/>
            <person name="Um H.-W."/>
            <person name="Lee H.-J."/>
            <person name="Oh S.-J."/>
            <person name="Kim J.Y."/>
            <person name="Kang H.L."/>
            <person name="Lee S.Y."/>
            <person name="Lee K.J."/>
            <person name="Kang H.S."/>
        </authorList>
    </citation>
    <scope>NUCLEOTIDE SEQUENCE [LARGE SCALE GENOMIC DNA]</scope>
    <source>
        <strain>ATCC 31821 / ZM4 / CP4</strain>
    </source>
</reference>
<feature type="chain" id="PRO_0000202055" description="DNA recombination protein RmuC homolog">
    <location>
        <begin position="1"/>
        <end position="448"/>
    </location>
</feature>
<feature type="coiled-coil region" evidence="2">
    <location>
        <begin position="43"/>
        <end position="167"/>
    </location>
</feature>
<feature type="sequence conflict" description="In Ref. 1; AAF23792." evidence="3" ref="1">
    <original>Q</original>
    <variation>P</variation>
    <location>
        <position position="210"/>
    </location>
</feature>
<name>RMUC_ZYMMO</name>
<comment type="function">
    <text evidence="1">Involved in DNA recombination.</text>
</comment>
<comment type="similarity">
    <text evidence="3">Belongs to the RmuC family.</text>
</comment>